<evidence type="ECO:0000255" key="1">
    <source>
        <dbReference type="HAMAP-Rule" id="MF_00034"/>
    </source>
</evidence>
<accession>P66763</accession>
<accession>Q8XGF7</accession>
<proteinExistence type="inferred from homology"/>
<gene>
    <name evidence="1" type="primary">ruvC</name>
    <name type="ordered locus">STY2106</name>
    <name type="ordered locus">t0979</name>
</gene>
<feature type="chain" id="PRO_0000183130" description="Crossover junction endodeoxyribonuclease RuvC">
    <location>
        <begin position="1"/>
        <end position="173"/>
    </location>
</feature>
<feature type="active site" evidence="1">
    <location>
        <position position="8"/>
    </location>
</feature>
<feature type="active site" evidence="1">
    <location>
        <position position="67"/>
    </location>
</feature>
<feature type="active site" evidence="1">
    <location>
        <position position="139"/>
    </location>
</feature>
<feature type="binding site" evidence="1">
    <location>
        <position position="8"/>
    </location>
    <ligand>
        <name>Mg(2+)</name>
        <dbReference type="ChEBI" id="CHEBI:18420"/>
        <label>1</label>
    </ligand>
</feature>
<feature type="binding site" evidence="1">
    <location>
        <position position="67"/>
    </location>
    <ligand>
        <name>Mg(2+)</name>
        <dbReference type="ChEBI" id="CHEBI:18420"/>
        <label>2</label>
    </ligand>
</feature>
<feature type="binding site" evidence="1">
    <location>
        <position position="139"/>
    </location>
    <ligand>
        <name>Mg(2+)</name>
        <dbReference type="ChEBI" id="CHEBI:18420"/>
        <label>1</label>
    </ligand>
</feature>
<comment type="function">
    <text evidence="1">The RuvA-RuvB-RuvC complex processes Holliday junction (HJ) DNA during genetic recombination and DNA repair. Endonuclease that resolves HJ intermediates. Cleaves cruciform DNA by making single-stranded nicks across the HJ at symmetrical positions within the homologous arms, yielding a 5'-phosphate and a 3'-hydroxyl group; requires a central core of homology in the junction. The consensus cleavage sequence is 5'-(A/T)TT(C/G)-3'. Cleavage occurs on the 3'-side of the TT dinucleotide at the point of strand exchange. HJ branch migration catalyzed by RuvA-RuvB allows RuvC to scan DNA until it finds its consensus sequence, where it cleaves and resolves the cruciform DNA.</text>
</comment>
<comment type="catalytic activity">
    <reaction evidence="1">
        <text>Endonucleolytic cleavage at a junction such as a reciprocal single-stranded crossover between two homologous DNA duplexes (Holliday junction).</text>
        <dbReference type="EC" id="3.1.21.10"/>
    </reaction>
</comment>
<comment type="cofactor">
    <cofactor evidence="1">
        <name>Mg(2+)</name>
        <dbReference type="ChEBI" id="CHEBI:18420"/>
    </cofactor>
    <text evidence="1">Binds 2 Mg(2+) ion per subunit.</text>
</comment>
<comment type="subunit">
    <text evidence="1">Homodimer which binds Holliday junction (HJ) DNA. The HJ becomes 2-fold symmetrical on binding to RuvC with unstacked arms; it has a different conformation from HJ DNA in complex with RuvA. In the full resolvosome a probable DNA-RuvA(4)-RuvB(12)-RuvC(2) complex forms which resolves the HJ.</text>
</comment>
<comment type="subcellular location">
    <subcellularLocation>
        <location evidence="1">Cytoplasm</location>
    </subcellularLocation>
</comment>
<comment type="similarity">
    <text evidence="1">Belongs to the RuvC family.</text>
</comment>
<protein>
    <recommendedName>
        <fullName evidence="1">Crossover junction endodeoxyribonuclease RuvC</fullName>
        <ecNumber evidence="1">3.1.21.10</ecNumber>
    </recommendedName>
    <alternativeName>
        <fullName evidence="1">Holliday junction nuclease RuvC</fullName>
    </alternativeName>
    <alternativeName>
        <fullName evidence="1">Holliday junction resolvase RuvC</fullName>
    </alternativeName>
</protein>
<name>RUVC_SALTI</name>
<organism>
    <name type="scientific">Salmonella typhi</name>
    <dbReference type="NCBI Taxonomy" id="90370"/>
    <lineage>
        <taxon>Bacteria</taxon>
        <taxon>Pseudomonadati</taxon>
        <taxon>Pseudomonadota</taxon>
        <taxon>Gammaproteobacteria</taxon>
        <taxon>Enterobacterales</taxon>
        <taxon>Enterobacteriaceae</taxon>
        <taxon>Salmonella</taxon>
    </lineage>
</organism>
<sequence>MSIILGIDPGSRITGYGVIRQVGRQLTYLGSGCIRTKVDDLPSRLKLIYAGVTEIITQFQPDYFAIEQVFMAKNADSALKLGQARGVAIVAAVNQELPVFEYAARQVKQTVVGIGSAEKSQVQHMVRTLLKLPANPQADAADALAIAITHCHVSQNAMQMSESRLNLARGRLR</sequence>
<keyword id="KW-0963">Cytoplasm</keyword>
<keyword id="KW-0227">DNA damage</keyword>
<keyword id="KW-0233">DNA recombination</keyword>
<keyword id="KW-0234">DNA repair</keyword>
<keyword id="KW-0238">DNA-binding</keyword>
<keyword id="KW-0255">Endonuclease</keyword>
<keyword id="KW-0378">Hydrolase</keyword>
<keyword id="KW-0460">Magnesium</keyword>
<keyword id="KW-0479">Metal-binding</keyword>
<keyword id="KW-0540">Nuclease</keyword>
<reference key="1">
    <citation type="journal article" date="2001" name="Nature">
        <title>Complete genome sequence of a multiple drug resistant Salmonella enterica serovar Typhi CT18.</title>
        <authorList>
            <person name="Parkhill J."/>
            <person name="Dougan G."/>
            <person name="James K.D."/>
            <person name="Thomson N.R."/>
            <person name="Pickard D."/>
            <person name="Wain J."/>
            <person name="Churcher C.M."/>
            <person name="Mungall K.L."/>
            <person name="Bentley S.D."/>
            <person name="Holden M.T.G."/>
            <person name="Sebaihia M."/>
            <person name="Baker S."/>
            <person name="Basham D."/>
            <person name="Brooks K."/>
            <person name="Chillingworth T."/>
            <person name="Connerton P."/>
            <person name="Cronin A."/>
            <person name="Davis P."/>
            <person name="Davies R.M."/>
            <person name="Dowd L."/>
            <person name="White N."/>
            <person name="Farrar J."/>
            <person name="Feltwell T."/>
            <person name="Hamlin N."/>
            <person name="Haque A."/>
            <person name="Hien T.T."/>
            <person name="Holroyd S."/>
            <person name="Jagels K."/>
            <person name="Krogh A."/>
            <person name="Larsen T.S."/>
            <person name="Leather S."/>
            <person name="Moule S."/>
            <person name="O'Gaora P."/>
            <person name="Parry C."/>
            <person name="Quail M.A."/>
            <person name="Rutherford K.M."/>
            <person name="Simmonds M."/>
            <person name="Skelton J."/>
            <person name="Stevens K."/>
            <person name="Whitehead S."/>
            <person name="Barrell B.G."/>
        </authorList>
    </citation>
    <scope>NUCLEOTIDE SEQUENCE [LARGE SCALE GENOMIC DNA]</scope>
    <source>
        <strain>CT18</strain>
    </source>
</reference>
<reference key="2">
    <citation type="journal article" date="2003" name="J. Bacteriol.">
        <title>Comparative genomics of Salmonella enterica serovar Typhi strains Ty2 and CT18.</title>
        <authorList>
            <person name="Deng W."/>
            <person name="Liou S.-R."/>
            <person name="Plunkett G. III"/>
            <person name="Mayhew G.F."/>
            <person name="Rose D.J."/>
            <person name="Burland V."/>
            <person name="Kodoyianni V."/>
            <person name="Schwartz D.C."/>
            <person name="Blattner F.R."/>
        </authorList>
    </citation>
    <scope>NUCLEOTIDE SEQUENCE [LARGE SCALE GENOMIC DNA]</scope>
    <source>
        <strain>ATCC 700931 / Ty2</strain>
    </source>
</reference>
<dbReference type="EC" id="3.1.21.10" evidence="1"/>
<dbReference type="EMBL" id="AL513382">
    <property type="protein sequence ID" value="CAD05649.1"/>
    <property type="molecule type" value="Genomic_DNA"/>
</dbReference>
<dbReference type="EMBL" id="AE014613">
    <property type="protein sequence ID" value="AAO68651.1"/>
    <property type="molecule type" value="Genomic_DNA"/>
</dbReference>
<dbReference type="RefSeq" id="NP_456465.1">
    <property type="nucleotide sequence ID" value="NC_003198.1"/>
</dbReference>
<dbReference type="RefSeq" id="WP_000022509.1">
    <property type="nucleotide sequence ID" value="NZ_WSUR01000004.1"/>
</dbReference>
<dbReference type="SMR" id="P66763"/>
<dbReference type="STRING" id="220341.gene:17586014"/>
<dbReference type="GeneID" id="93033412"/>
<dbReference type="KEGG" id="stt:t0979"/>
<dbReference type="KEGG" id="sty:STY2106"/>
<dbReference type="PATRIC" id="fig|220341.7.peg.2116"/>
<dbReference type="eggNOG" id="COG0817">
    <property type="taxonomic scope" value="Bacteria"/>
</dbReference>
<dbReference type="HOGENOM" id="CLU_091257_2_1_6"/>
<dbReference type="OMA" id="AICHIWR"/>
<dbReference type="OrthoDB" id="9805499at2"/>
<dbReference type="Proteomes" id="UP000000541">
    <property type="component" value="Chromosome"/>
</dbReference>
<dbReference type="Proteomes" id="UP000002670">
    <property type="component" value="Chromosome"/>
</dbReference>
<dbReference type="GO" id="GO:0005737">
    <property type="term" value="C:cytoplasm"/>
    <property type="evidence" value="ECO:0007669"/>
    <property type="project" value="UniProtKB-SubCell"/>
</dbReference>
<dbReference type="GO" id="GO:0048476">
    <property type="term" value="C:Holliday junction resolvase complex"/>
    <property type="evidence" value="ECO:0007669"/>
    <property type="project" value="UniProtKB-UniRule"/>
</dbReference>
<dbReference type="GO" id="GO:0008821">
    <property type="term" value="F:crossover junction DNA endonuclease activity"/>
    <property type="evidence" value="ECO:0007669"/>
    <property type="project" value="UniProtKB-UniRule"/>
</dbReference>
<dbReference type="GO" id="GO:0003677">
    <property type="term" value="F:DNA binding"/>
    <property type="evidence" value="ECO:0007669"/>
    <property type="project" value="UniProtKB-KW"/>
</dbReference>
<dbReference type="GO" id="GO:0000287">
    <property type="term" value="F:magnesium ion binding"/>
    <property type="evidence" value="ECO:0007669"/>
    <property type="project" value="UniProtKB-UniRule"/>
</dbReference>
<dbReference type="GO" id="GO:0006310">
    <property type="term" value="P:DNA recombination"/>
    <property type="evidence" value="ECO:0007669"/>
    <property type="project" value="UniProtKB-UniRule"/>
</dbReference>
<dbReference type="GO" id="GO:0006281">
    <property type="term" value="P:DNA repair"/>
    <property type="evidence" value="ECO:0007669"/>
    <property type="project" value="UniProtKB-UniRule"/>
</dbReference>
<dbReference type="CDD" id="cd16962">
    <property type="entry name" value="RuvC"/>
    <property type="match status" value="1"/>
</dbReference>
<dbReference type="FunFam" id="3.30.420.10:FF:000002">
    <property type="entry name" value="Crossover junction endodeoxyribonuclease RuvC"/>
    <property type="match status" value="1"/>
</dbReference>
<dbReference type="Gene3D" id="3.30.420.10">
    <property type="entry name" value="Ribonuclease H-like superfamily/Ribonuclease H"/>
    <property type="match status" value="1"/>
</dbReference>
<dbReference type="HAMAP" id="MF_00034">
    <property type="entry name" value="RuvC"/>
    <property type="match status" value="1"/>
</dbReference>
<dbReference type="InterPro" id="IPR012337">
    <property type="entry name" value="RNaseH-like_sf"/>
</dbReference>
<dbReference type="InterPro" id="IPR036397">
    <property type="entry name" value="RNaseH_sf"/>
</dbReference>
<dbReference type="InterPro" id="IPR020563">
    <property type="entry name" value="X-over_junc_endoDNase_Mg_BS"/>
</dbReference>
<dbReference type="InterPro" id="IPR002176">
    <property type="entry name" value="X-over_junc_endoDNase_RuvC"/>
</dbReference>
<dbReference type="NCBIfam" id="NF000711">
    <property type="entry name" value="PRK00039.2-1"/>
    <property type="match status" value="1"/>
</dbReference>
<dbReference type="NCBIfam" id="TIGR00228">
    <property type="entry name" value="ruvC"/>
    <property type="match status" value="1"/>
</dbReference>
<dbReference type="PANTHER" id="PTHR30194">
    <property type="entry name" value="CROSSOVER JUNCTION ENDODEOXYRIBONUCLEASE RUVC"/>
    <property type="match status" value="1"/>
</dbReference>
<dbReference type="PANTHER" id="PTHR30194:SF3">
    <property type="entry name" value="CROSSOVER JUNCTION ENDODEOXYRIBONUCLEASE RUVC"/>
    <property type="match status" value="1"/>
</dbReference>
<dbReference type="Pfam" id="PF02075">
    <property type="entry name" value="RuvC"/>
    <property type="match status" value="1"/>
</dbReference>
<dbReference type="PRINTS" id="PR00696">
    <property type="entry name" value="RSOLVASERUVC"/>
</dbReference>
<dbReference type="SUPFAM" id="SSF53098">
    <property type="entry name" value="Ribonuclease H-like"/>
    <property type="match status" value="1"/>
</dbReference>
<dbReference type="PROSITE" id="PS01321">
    <property type="entry name" value="RUVC"/>
    <property type="match status" value="1"/>
</dbReference>